<gene>
    <name evidence="1" type="primary">rny</name>
    <name type="ordered locus">BF3405</name>
</gene>
<keyword id="KW-1003">Cell membrane</keyword>
<keyword id="KW-0255">Endonuclease</keyword>
<keyword id="KW-0378">Hydrolase</keyword>
<keyword id="KW-0472">Membrane</keyword>
<keyword id="KW-0540">Nuclease</keyword>
<keyword id="KW-0694">RNA-binding</keyword>
<keyword id="KW-0812">Transmembrane</keyword>
<keyword id="KW-1133">Transmembrane helix</keyword>
<name>RNY_BACFN</name>
<evidence type="ECO:0000255" key="1">
    <source>
        <dbReference type="HAMAP-Rule" id="MF_00335"/>
    </source>
</evidence>
<evidence type="ECO:0000255" key="2">
    <source>
        <dbReference type="PROSITE-ProRule" id="PRU01175"/>
    </source>
</evidence>
<dbReference type="EC" id="3.1.-.-" evidence="1"/>
<dbReference type="EMBL" id="CR626927">
    <property type="protein sequence ID" value="CAH09096.1"/>
    <property type="molecule type" value="Genomic_DNA"/>
</dbReference>
<dbReference type="RefSeq" id="WP_005790424.1">
    <property type="nucleotide sequence ID" value="NZ_UFTH01000001.1"/>
</dbReference>
<dbReference type="SMR" id="Q5L9Y0"/>
<dbReference type="PaxDb" id="272559-BF9343_3315"/>
<dbReference type="DNASU" id="3286063"/>
<dbReference type="GeneID" id="60367103"/>
<dbReference type="KEGG" id="bfs:BF9343_3315"/>
<dbReference type="eggNOG" id="COG1418">
    <property type="taxonomic scope" value="Bacteria"/>
</dbReference>
<dbReference type="HOGENOM" id="CLU_028328_1_0_10"/>
<dbReference type="Proteomes" id="UP000006731">
    <property type="component" value="Chromosome"/>
</dbReference>
<dbReference type="GO" id="GO:0005886">
    <property type="term" value="C:plasma membrane"/>
    <property type="evidence" value="ECO:0007669"/>
    <property type="project" value="UniProtKB-SubCell"/>
</dbReference>
<dbReference type="GO" id="GO:0003723">
    <property type="term" value="F:RNA binding"/>
    <property type="evidence" value="ECO:0007669"/>
    <property type="project" value="UniProtKB-UniRule"/>
</dbReference>
<dbReference type="GO" id="GO:0004521">
    <property type="term" value="F:RNA endonuclease activity"/>
    <property type="evidence" value="ECO:0007669"/>
    <property type="project" value="UniProtKB-UniRule"/>
</dbReference>
<dbReference type="GO" id="GO:0006402">
    <property type="term" value="P:mRNA catabolic process"/>
    <property type="evidence" value="ECO:0007669"/>
    <property type="project" value="UniProtKB-UniRule"/>
</dbReference>
<dbReference type="CDD" id="cd00077">
    <property type="entry name" value="HDc"/>
    <property type="match status" value="1"/>
</dbReference>
<dbReference type="CDD" id="cd22431">
    <property type="entry name" value="KH-I_RNaseY"/>
    <property type="match status" value="1"/>
</dbReference>
<dbReference type="FunFam" id="1.10.3210.10:FF:000013">
    <property type="entry name" value="Ribonuclease Y"/>
    <property type="match status" value="1"/>
</dbReference>
<dbReference type="Gene3D" id="1.10.3210.10">
    <property type="entry name" value="Hypothetical protein af1432"/>
    <property type="match status" value="1"/>
</dbReference>
<dbReference type="Gene3D" id="3.30.1370.10">
    <property type="entry name" value="K Homology domain, type 1"/>
    <property type="match status" value="1"/>
</dbReference>
<dbReference type="HAMAP" id="MF_00335">
    <property type="entry name" value="RNase_Y"/>
    <property type="match status" value="1"/>
</dbReference>
<dbReference type="InterPro" id="IPR003607">
    <property type="entry name" value="HD/PDEase_dom"/>
</dbReference>
<dbReference type="InterPro" id="IPR006674">
    <property type="entry name" value="HD_domain"/>
</dbReference>
<dbReference type="InterPro" id="IPR006675">
    <property type="entry name" value="HDIG_dom"/>
</dbReference>
<dbReference type="InterPro" id="IPR004087">
    <property type="entry name" value="KH_dom"/>
</dbReference>
<dbReference type="InterPro" id="IPR004088">
    <property type="entry name" value="KH_dom_type_1"/>
</dbReference>
<dbReference type="InterPro" id="IPR036612">
    <property type="entry name" value="KH_dom_type_1_sf"/>
</dbReference>
<dbReference type="InterPro" id="IPR017705">
    <property type="entry name" value="Ribonuclease_Y"/>
</dbReference>
<dbReference type="InterPro" id="IPR022711">
    <property type="entry name" value="RNase_Y_N"/>
</dbReference>
<dbReference type="NCBIfam" id="TIGR00277">
    <property type="entry name" value="HDIG"/>
    <property type="match status" value="1"/>
</dbReference>
<dbReference type="NCBIfam" id="TIGR03319">
    <property type="entry name" value="RNase_Y"/>
    <property type="match status" value="1"/>
</dbReference>
<dbReference type="PANTHER" id="PTHR12826">
    <property type="entry name" value="RIBONUCLEASE Y"/>
    <property type="match status" value="1"/>
</dbReference>
<dbReference type="PANTHER" id="PTHR12826:SF15">
    <property type="entry name" value="RIBONUCLEASE Y"/>
    <property type="match status" value="1"/>
</dbReference>
<dbReference type="Pfam" id="PF01966">
    <property type="entry name" value="HD"/>
    <property type="match status" value="1"/>
</dbReference>
<dbReference type="Pfam" id="PF00013">
    <property type="entry name" value="KH_1"/>
    <property type="match status" value="1"/>
</dbReference>
<dbReference type="Pfam" id="PF12072">
    <property type="entry name" value="RNase_Y_N"/>
    <property type="match status" value="1"/>
</dbReference>
<dbReference type="SMART" id="SM00471">
    <property type="entry name" value="HDc"/>
    <property type="match status" value="1"/>
</dbReference>
<dbReference type="SMART" id="SM00322">
    <property type="entry name" value="KH"/>
    <property type="match status" value="1"/>
</dbReference>
<dbReference type="SUPFAM" id="SSF54791">
    <property type="entry name" value="Eukaryotic type KH-domain (KH-domain type I)"/>
    <property type="match status" value="1"/>
</dbReference>
<dbReference type="SUPFAM" id="SSF109604">
    <property type="entry name" value="HD-domain/PDEase-like"/>
    <property type="match status" value="1"/>
</dbReference>
<dbReference type="PROSITE" id="PS51831">
    <property type="entry name" value="HD"/>
    <property type="match status" value="1"/>
</dbReference>
<dbReference type="PROSITE" id="PS50084">
    <property type="entry name" value="KH_TYPE_1"/>
    <property type="match status" value="1"/>
</dbReference>
<feature type="chain" id="PRO_0000344825" description="Ribonuclease Y">
    <location>
        <begin position="1"/>
        <end position="511"/>
    </location>
</feature>
<feature type="transmembrane region" description="Helical" evidence="1">
    <location>
        <begin position="3"/>
        <end position="23"/>
    </location>
</feature>
<feature type="domain" description="KH" evidence="1">
    <location>
        <begin position="201"/>
        <end position="261"/>
    </location>
</feature>
<feature type="domain" description="HD" evidence="2">
    <location>
        <begin position="327"/>
        <end position="420"/>
    </location>
</feature>
<organism>
    <name type="scientific">Bacteroides fragilis (strain ATCC 25285 / DSM 2151 / CCUG 4856 / JCM 11019 / LMG 10263 / NCTC 9343 / Onslow / VPI 2553 / EN-2)</name>
    <dbReference type="NCBI Taxonomy" id="272559"/>
    <lineage>
        <taxon>Bacteria</taxon>
        <taxon>Pseudomonadati</taxon>
        <taxon>Bacteroidota</taxon>
        <taxon>Bacteroidia</taxon>
        <taxon>Bacteroidales</taxon>
        <taxon>Bacteroidaceae</taxon>
        <taxon>Bacteroides</taxon>
    </lineage>
</organism>
<accession>Q5L9Y0</accession>
<reference key="1">
    <citation type="journal article" date="2005" name="Science">
        <title>Extensive DNA inversions in the B. fragilis genome control variable gene expression.</title>
        <authorList>
            <person name="Cerdeno-Tarraga A.-M."/>
            <person name="Patrick S."/>
            <person name="Crossman L.C."/>
            <person name="Blakely G."/>
            <person name="Abratt V."/>
            <person name="Lennard N."/>
            <person name="Poxton I."/>
            <person name="Duerden B."/>
            <person name="Harris B."/>
            <person name="Quail M.A."/>
            <person name="Barron A."/>
            <person name="Clark L."/>
            <person name="Corton C."/>
            <person name="Doggett J."/>
            <person name="Holden M.T.G."/>
            <person name="Larke N."/>
            <person name="Line A."/>
            <person name="Lord A."/>
            <person name="Norbertczak H."/>
            <person name="Ormond D."/>
            <person name="Price C."/>
            <person name="Rabbinowitsch E."/>
            <person name="Woodward J."/>
            <person name="Barrell B.G."/>
            <person name="Parkhill J."/>
        </authorList>
    </citation>
    <scope>NUCLEOTIDE SEQUENCE [LARGE SCALE GENOMIC DNA]</scope>
    <source>
        <strain>ATCC 25285 / DSM 2151 / CCUG 4856 / JCM 11019 / LMG 10263 / NCTC 9343 / Onslow / VPI 2553 / EN-2</strain>
    </source>
</reference>
<protein>
    <recommendedName>
        <fullName evidence="1">Ribonuclease Y</fullName>
        <shortName evidence="1">RNase Y</shortName>
        <ecNumber evidence="1">3.1.-.-</ecNumber>
    </recommendedName>
</protein>
<proteinExistence type="inferred from homology"/>
<comment type="function">
    <text evidence="1">Endoribonuclease that initiates mRNA decay.</text>
</comment>
<comment type="subcellular location">
    <subcellularLocation>
        <location evidence="1">Cell membrane</location>
        <topology evidence="1">Single-pass membrane protein</topology>
    </subcellularLocation>
</comment>
<comment type="similarity">
    <text evidence="1">Belongs to the RNase Y family.</text>
</comment>
<sequence>MLVTIVASIACFIVGGILSYVLFKYGLKAKYDNVLKEAETEAEVIKKNKLLEVKEKFLNKKADLEKEVALRNQKIQQAENKLKQREMVLSQRQEEIQRKRAEADAVRENLEAQLGIVDKKKEELDKLQHQEIEKLEALSGLSADEAKERLVESLKEEAKTQAQSYINDIMDDAKLTASKEAKRIVIQSIQRVATETAIENSVTVFHIESDEIKGRIIGREGRNIRALEAATGVEIVVDDTPEAIVLSAFDPVRREIARLALHQLVTDGRIHPARIEEVVAKVRKQVEEEIIETGKRTTIDLGIHGLHPELIRIIGKMKYRSSYGQNLLQHARETANLCAVMASELGLNPKKAKRAGLLHDIGKVPDEEPELPHALLGMKLAEKFKEKPDICNAIGAHHDEIEMTSLLAPIVQVCDAISGARPGARREIVEAYIKRLNDLEQLAMSYPGVTKTYAIQAGRELRVIVGADKIDDKQTENLSGEIAKKIQDEMTYPGQVKITVIRETRAVSFAK</sequence>